<accession>Q5P7Z3</accession>
<evidence type="ECO:0000255" key="1">
    <source>
        <dbReference type="HAMAP-Rule" id="MF_00456"/>
    </source>
</evidence>
<dbReference type="EC" id="2.7.2.11" evidence="1"/>
<dbReference type="EMBL" id="CR555306">
    <property type="protein sequence ID" value="CAI06568.1"/>
    <property type="molecule type" value="Genomic_DNA"/>
</dbReference>
<dbReference type="RefSeq" id="WP_011236301.1">
    <property type="nucleotide sequence ID" value="NC_006513.1"/>
</dbReference>
<dbReference type="SMR" id="Q5P7Z3"/>
<dbReference type="STRING" id="76114.ebA844"/>
<dbReference type="KEGG" id="eba:ebA844"/>
<dbReference type="eggNOG" id="COG0263">
    <property type="taxonomic scope" value="Bacteria"/>
</dbReference>
<dbReference type="HOGENOM" id="CLU_025400_2_0_4"/>
<dbReference type="OrthoDB" id="9804434at2"/>
<dbReference type="UniPathway" id="UPA00098">
    <property type="reaction ID" value="UER00359"/>
</dbReference>
<dbReference type="Proteomes" id="UP000006552">
    <property type="component" value="Chromosome"/>
</dbReference>
<dbReference type="GO" id="GO:0005829">
    <property type="term" value="C:cytosol"/>
    <property type="evidence" value="ECO:0007669"/>
    <property type="project" value="TreeGrafter"/>
</dbReference>
<dbReference type="GO" id="GO:0005524">
    <property type="term" value="F:ATP binding"/>
    <property type="evidence" value="ECO:0007669"/>
    <property type="project" value="UniProtKB-KW"/>
</dbReference>
<dbReference type="GO" id="GO:0004349">
    <property type="term" value="F:glutamate 5-kinase activity"/>
    <property type="evidence" value="ECO:0007669"/>
    <property type="project" value="UniProtKB-UniRule"/>
</dbReference>
<dbReference type="GO" id="GO:0003723">
    <property type="term" value="F:RNA binding"/>
    <property type="evidence" value="ECO:0007669"/>
    <property type="project" value="InterPro"/>
</dbReference>
<dbReference type="GO" id="GO:0055129">
    <property type="term" value="P:L-proline biosynthetic process"/>
    <property type="evidence" value="ECO:0007669"/>
    <property type="project" value="UniProtKB-UniRule"/>
</dbReference>
<dbReference type="CDD" id="cd04242">
    <property type="entry name" value="AAK_G5K_ProB"/>
    <property type="match status" value="1"/>
</dbReference>
<dbReference type="CDD" id="cd21157">
    <property type="entry name" value="PUA_G5K"/>
    <property type="match status" value="1"/>
</dbReference>
<dbReference type="FunFam" id="2.30.130.10:FF:000007">
    <property type="entry name" value="Glutamate 5-kinase"/>
    <property type="match status" value="1"/>
</dbReference>
<dbReference type="FunFam" id="3.40.1160.10:FF:000018">
    <property type="entry name" value="Glutamate 5-kinase"/>
    <property type="match status" value="1"/>
</dbReference>
<dbReference type="Gene3D" id="3.40.1160.10">
    <property type="entry name" value="Acetylglutamate kinase-like"/>
    <property type="match status" value="2"/>
</dbReference>
<dbReference type="Gene3D" id="2.30.130.10">
    <property type="entry name" value="PUA domain"/>
    <property type="match status" value="1"/>
</dbReference>
<dbReference type="HAMAP" id="MF_00456">
    <property type="entry name" value="ProB"/>
    <property type="match status" value="1"/>
</dbReference>
<dbReference type="InterPro" id="IPR036393">
    <property type="entry name" value="AceGlu_kinase-like_sf"/>
</dbReference>
<dbReference type="InterPro" id="IPR001048">
    <property type="entry name" value="Asp/Glu/Uridylate_kinase"/>
</dbReference>
<dbReference type="InterPro" id="IPR041739">
    <property type="entry name" value="G5K_ProB"/>
</dbReference>
<dbReference type="InterPro" id="IPR001057">
    <property type="entry name" value="Glu/AcGlu_kinase"/>
</dbReference>
<dbReference type="InterPro" id="IPR011529">
    <property type="entry name" value="Glu_5kinase"/>
</dbReference>
<dbReference type="InterPro" id="IPR005715">
    <property type="entry name" value="Glu_5kinase/COase_Synthase"/>
</dbReference>
<dbReference type="InterPro" id="IPR019797">
    <property type="entry name" value="Glutamate_5-kinase_CS"/>
</dbReference>
<dbReference type="InterPro" id="IPR002478">
    <property type="entry name" value="PUA"/>
</dbReference>
<dbReference type="InterPro" id="IPR015947">
    <property type="entry name" value="PUA-like_sf"/>
</dbReference>
<dbReference type="InterPro" id="IPR036974">
    <property type="entry name" value="PUA_sf"/>
</dbReference>
<dbReference type="NCBIfam" id="TIGR01027">
    <property type="entry name" value="proB"/>
    <property type="match status" value="1"/>
</dbReference>
<dbReference type="PANTHER" id="PTHR43654">
    <property type="entry name" value="GLUTAMATE 5-KINASE"/>
    <property type="match status" value="1"/>
</dbReference>
<dbReference type="PANTHER" id="PTHR43654:SF1">
    <property type="entry name" value="ISOPENTENYL PHOSPHATE KINASE"/>
    <property type="match status" value="1"/>
</dbReference>
<dbReference type="Pfam" id="PF00696">
    <property type="entry name" value="AA_kinase"/>
    <property type="match status" value="1"/>
</dbReference>
<dbReference type="Pfam" id="PF01472">
    <property type="entry name" value="PUA"/>
    <property type="match status" value="1"/>
</dbReference>
<dbReference type="PIRSF" id="PIRSF000729">
    <property type="entry name" value="GK"/>
    <property type="match status" value="1"/>
</dbReference>
<dbReference type="PRINTS" id="PR00474">
    <property type="entry name" value="GLU5KINASE"/>
</dbReference>
<dbReference type="SMART" id="SM00359">
    <property type="entry name" value="PUA"/>
    <property type="match status" value="1"/>
</dbReference>
<dbReference type="SUPFAM" id="SSF53633">
    <property type="entry name" value="Carbamate kinase-like"/>
    <property type="match status" value="1"/>
</dbReference>
<dbReference type="SUPFAM" id="SSF88697">
    <property type="entry name" value="PUA domain-like"/>
    <property type="match status" value="1"/>
</dbReference>
<dbReference type="PROSITE" id="PS00902">
    <property type="entry name" value="GLUTAMATE_5_KINASE"/>
    <property type="match status" value="1"/>
</dbReference>
<dbReference type="PROSITE" id="PS50890">
    <property type="entry name" value="PUA"/>
    <property type="match status" value="1"/>
</dbReference>
<reference key="1">
    <citation type="journal article" date="2005" name="Arch. Microbiol.">
        <title>The genome sequence of an anaerobic aromatic-degrading denitrifying bacterium, strain EbN1.</title>
        <authorList>
            <person name="Rabus R."/>
            <person name="Kube M."/>
            <person name="Heider J."/>
            <person name="Beck A."/>
            <person name="Heitmann K."/>
            <person name="Widdel F."/>
            <person name="Reinhardt R."/>
        </authorList>
    </citation>
    <scope>NUCLEOTIDE SEQUENCE [LARGE SCALE GENOMIC DNA]</scope>
    <source>
        <strain>DSM 19018 / LMG 30748 / EbN1</strain>
    </source>
</reference>
<gene>
    <name evidence="1" type="primary">proB</name>
    <name type="ordered locus">AZOSEA04460</name>
    <name type="ORF">ebA844</name>
</gene>
<sequence>MRDKIRNARRIVVKVGSALVTNNGAGLDKAAMGDWARQIATLRGAGKQVVLVSSGAIAAGMQRLGWQKRPHEMHKLQAAAAVGQMGLVKAYEDAFSRHNLHTAQILLTHDDLADRKRYLNARSTLTTLLELGVVPIINENDTIVTDEIKFGDNDTLGALVANLIEAHALVILTDQQGLYTADPRRDPNATLVCEGRAEDRSYEAMAGGAGTGISRGGMITKIRAAQRAARSGAHTCIASGNEVDALIRLTQAEPLGTLLYATSSPLQARKQWLADHLQLAGDLILDDGAVVALRSGRSLLPVGVVEVGGEFERGAAVACRSAGGDEIARGLVNYSSSECRRIARKSSTQIEKLLGYIDEPELVHRDNMVLR</sequence>
<proteinExistence type="inferred from homology"/>
<keyword id="KW-0028">Amino-acid biosynthesis</keyword>
<keyword id="KW-0067">ATP-binding</keyword>
<keyword id="KW-0963">Cytoplasm</keyword>
<keyword id="KW-0418">Kinase</keyword>
<keyword id="KW-0547">Nucleotide-binding</keyword>
<keyword id="KW-0641">Proline biosynthesis</keyword>
<keyword id="KW-1185">Reference proteome</keyword>
<keyword id="KW-0808">Transferase</keyword>
<feature type="chain" id="PRO_0000109631" description="Glutamate 5-kinase">
    <location>
        <begin position="1"/>
        <end position="371"/>
    </location>
</feature>
<feature type="domain" description="PUA" evidence="1">
    <location>
        <begin position="280"/>
        <end position="357"/>
    </location>
</feature>
<feature type="binding site" evidence="1">
    <location>
        <position position="14"/>
    </location>
    <ligand>
        <name>ATP</name>
        <dbReference type="ChEBI" id="CHEBI:30616"/>
    </ligand>
</feature>
<feature type="binding site" evidence="1">
    <location>
        <position position="54"/>
    </location>
    <ligand>
        <name>substrate</name>
    </ligand>
</feature>
<feature type="binding site" evidence="1">
    <location>
        <position position="141"/>
    </location>
    <ligand>
        <name>substrate</name>
    </ligand>
</feature>
<feature type="binding site" evidence="1">
    <location>
        <position position="153"/>
    </location>
    <ligand>
        <name>substrate</name>
    </ligand>
</feature>
<feature type="binding site" evidence="1">
    <location>
        <begin position="173"/>
        <end position="174"/>
    </location>
    <ligand>
        <name>ATP</name>
        <dbReference type="ChEBI" id="CHEBI:30616"/>
    </ligand>
</feature>
<protein>
    <recommendedName>
        <fullName evidence="1">Glutamate 5-kinase</fullName>
        <ecNumber evidence="1">2.7.2.11</ecNumber>
    </recommendedName>
    <alternativeName>
        <fullName evidence="1">Gamma-glutamyl kinase</fullName>
        <shortName evidence="1">GK</shortName>
    </alternativeName>
</protein>
<organism>
    <name type="scientific">Aromatoleum aromaticum (strain DSM 19018 / LMG 30748 / EbN1)</name>
    <name type="common">Azoarcus sp. (strain EbN1)</name>
    <dbReference type="NCBI Taxonomy" id="76114"/>
    <lineage>
        <taxon>Bacteria</taxon>
        <taxon>Pseudomonadati</taxon>
        <taxon>Pseudomonadota</taxon>
        <taxon>Betaproteobacteria</taxon>
        <taxon>Rhodocyclales</taxon>
        <taxon>Rhodocyclaceae</taxon>
        <taxon>Aromatoleum</taxon>
    </lineage>
</organism>
<comment type="function">
    <text evidence="1">Catalyzes the transfer of a phosphate group to glutamate to form L-glutamate 5-phosphate.</text>
</comment>
<comment type="catalytic activity">
    <reaction evidence="1">
        <text>L-glutamate + ATP = L-glutamyl 5-phosphate + ADP</text>
        <dbReference type="Rhea" id="RHEA:14877"/>
        <dbReference type="ChEBI" id="CHEBI:29985"/>
        <dbReference type="ChEBI" id="CHEBI:30616"/>
        <dbReference type="ChEBI" id="CHEBI:58274"/>
        <dbReference type="ChEBI" id="CHEBI:456216"/>
        <dbReference type="EC" id="2.7.2.11"/>
    </reaction>
</comment>
<comment type="pathway">
    <text evidence="1">Amino-acid biosynthesis; L-proline biosynthesis; L-glutamate 5-semialdehyde from L-glutamate: step 1/2.</text>
</comment>
<comment type="subcellular location">
    <subcellularLocation>
        <location evidence="1">Cytoplasm</location>
    </subcellularLocation>
</comment>
<comment type="similarity">
    <text evidence="1">Belongs to the glutamate 5-kinase family.</text>
</comment>
<name>PROB_AROAE</name>